<accession>O95292</accession>
<accession>A2A2F2</accession>
<accession>O95293</accession>
<accession>Q9P0H0</accession>
<protein>
    <recommendedName>
        <fullName evidence="22">Vesicle-associated membrane protein-associated protein B/C</fullName>
        <shortName>VAMP-B/VAMP-C</shortName>
        <shortName>VAMP-associated protein B/C</shortName>
        <shortName>VAP-B/VAP-C</shortName>
    </recommendedName>
</protein>
<evidence type="ECO:0000250" key="1">
    <source>
        <dbReference type="UniProtKB" id="Q9P0L0"/>
    </source>
</evidence>
<evidence type="ECO:0000255" key="2"/>
<evidence type="ECO:0000255" key="3">
    <source>
        <dbReference type="PROSITE-ProRule" id="PRU00132"/>
    </source>
</evidence>
<evidence type="ECO:0000269" key="4">
    <source>
    </source>
</evidence>
<evidence type="ECO:0000269" key="5">
    <source>
    </source>
</evidence>
<evidence type="ECO:0000269" key="6">
    <source>
    </source>
</evidence>
<evidence type="ECO:0000269" key="7">
    <source>
    </source>
</evidence>
<evidence type="ECO:0000269" key="8">
    <source>
    </source>
</evidence>
<evidence type="ECO:0000269" key="9">
    <source>
    </source>
</evidence>
<evidence type="ECO:0000269" key="10">
    <source>
    </source>
</evidence>
<evidence type="ECO:0000269" key="11">
    <source>
    </source>
</evidence>
<evidence type="ECO:0000269" key="12">
    <source>
    </source>
</evidence>
<evidence type="ECO:0000269" key="13">
    <source>
    </source>
</evidence>
<evidence type="ECO:0000269" key="14">
    <source>
    </source>
</evidence>
<evidence type="ECO:0000269" key="15">
    <source>
    </source>
</evidence>
<evidence type="ECO:0000269" key="16">
    <source>
    </source>
</evidence>
<evidence type="ECO:0000269" key="17">
    <source>
    </source>
</evidence>
<evidence type="ECO:0000269" key="18">
    <source>
    </source>
</evidence>
<evidence type="ECO:0000269" key="19">
    <source>
    </source>
</evidence>
<evidence type="ECO:0000269" key="20">
    <source>
    </source>
</evidence>
<evidence type="ECO:0000303" key="21">
    <source>
    </source>
</evidence>
<evidence type="ECO:0000305" key="22"/>
<evidence type="ECO:0000312" key="23">
    <source>
        <dbReference type="HGNC" id="HGNC:12649"/>
    </source>
</evidence>
<evidence type="ECO:0007744" key="24">
    <source>
    </source>
</evidence>
<evidence type="ECO:0007744" key="25">
    <source>
    </source>
</evidence>
<evidence type="ECO:0007744" key="26">
    <source>
    </source>
</evidence>
<evidence type="ECO:0007744" key="27">
    <source>
    </source>
</evidence>
<evidence type="ECO:0007744" key="28">
    <source>
    </source>
</evidence>
<evidence type="ECO:0007744" key="29">
    <source>
    </source>
</evidence>
<evidence type="ECO:0007744" key="30">
    <source>
    </source>
</evidence>
<evidence type="ECO:0007829" key="31">
    <source>
        <dbReference type="PDB" id="2MDK"/>
    </source>
</evidence>
<evidence type="ECO:0007829" key="32">
    <source>
        <dbReference type="PDB" id="3IKK"/>
    </source>
</evidence>
<organism>
    <name type="scientific">Homo sapiens</name>
    <name type="common">Human</name>
    <dbReference type="NCBI Taxonomy" id="9606"/>
    <lineage>
        <taxon>Eukaryota</taxon>
        <taxon>Metazoa</taxon>
        <taxon>Chordata</taxon>
        <taxon>Craniata</taxon>
        <taxon>Vertebrata</taxon>
        <taxon>Euteleostomi</taxon>
        <taxon>Mammalia</taxon>
        <taxon>Eutheria</taxon>
        <taxon>Euarchontoglires</taxon>
        <taxon>Primates</taxon>
        <taxon>Haplorrhini</taxon>
        <taxon>Catarrhini</taxon>
        <taxon>Hominidae</taxon>
        <taxon>Homo</taxon>
    </lineage>
</organism>
<dbReference type="EMBL" id="AF086628">
    <property type="protein sequence ID" value="AAD13577.1"/>
    <property type="molecule type" value="mRNA"/>
</dbReference>
<dbReference type="EMBL" id="AF086629">
    <property type="protein sequence ID" value="AAD13578.1"/>
    <property type="molecule type" value="mRNA"/>
</dbReference>
<dbReference type="EMBL" id="AF160212">
    <property type="protein sequence ID" value="AAF67013.1"/>
    <property type="molecule type" value="mRNA"/>
</dbReference>
<dbReference type="EMBL" id="AY358464">
    <property type="protein sequence ID" value="AAQ88829.1"/>
    <property type="molecule type" value="mRNA"/>
</dbReference>
<dbReference type="EMBL" id="AL035455">
    <property type="status" value="NOT_ANNOTATED_CDS"/>
    <property type="molecule type" value="Genomic_DNA"/>
</dbReference>
<dbReference type="EMBL" id="BC001712">
    <property type="protein sequence ID" value="AAH01712.1"/>
    <property type="molecule type" value="mRNA"/>
</dbReference>
<dbReference type="CCDS" id="CCDS33498.1">
    <molecule id="O95292-1"/>
</dbReference>
<dbReference type="CCDS" id="CCDS56198.1">
    <molecule id="O95292-2"/>
</dbReference>
<dbReference type="PIR" id="JG0186">
    <property type="entry name" value="JG0186"/>
</dbReference>
<dbReference type="RefSeq" id="NP_001182606.1">
    <molecule id="O95292-2"/>
    <property type="nucleotide sequence ID" value="NM_001195677.2"/>
</dbReference>
<dbReference type="RefSeq" id="NP_004729.1">
    <molecule id="O95292-1"/>
    <property type="nucleotide sequence ID" value="NM_004738.5"/>
</dbReference>
<dbReference type="PDB" id="2MDK">
    <property type="method" value="NMR"/>
    <property type="chains" value="A=1-125"/>
</dbReference>
<dbReference type="PDB" id="3IKK">
    <property type="method" value="X-ray"/>
    <property type="resolution" value="2.50 A"/>
    <property type="chains" value="A/B=1-125"/>
</dbReference>
<dbReference type="PDBsum" id="2MDK"/>
<dbReference type="PDBsum" id="3IKK"/>
<dbReference type="BMRB" id="O95292"/>
<dbReference type="SMR" id="O95292"/>
<dbReference type="BioGRID" id="114650">
    <property type="interactions" value="503"/>
</dbReference>
<dbReference type="CORUM" id="O95292"/>
<dbReference type="DIP" id="DIP-39816N"/>
<dbReference type="FunCoup" id="O95292">
    <property type="interactions" value="2786"/>
</dbReference>
<dbReference type="IntAct" id="O95292">
    <property type="interactions" value="307"/>
</dbReference>
<dbReference type="MINT" id="O95292"/>
<dbReference type="STRING" id="9606.ENSP00000417175"/>
<dbReference type="TCDB" id="1.R.1.1.1">
    <property type="family name" value="the membrane contact site (mcs) family"/>
</dbReference>
<dbReference type="TCDB" id="9.B.17.1.1">
    <property type="family name" value="the vamp-associated protein (vap) family"/>
</dbReference>
<dbReference type="GlyCosmos" id="O95292">
    <property type="glycosylation" value="2 sites, 1 glycan"/>
</dbReference>
<dbReference type="GlyGen" id="O95292">
    <property type="glycosylation" value="5 sites, 1 O-linked glycan (5 sites)"/>
</dbReference>
<dbReference type="iPTMnet" id="O95292"/>
<dbReference type="PhosphoSitePlus" id="O95292"/>
<dbReference type="SwissPalm" id="O95292"/>
<dbReference type="BioMuta" id="VAPB"/>
<dbReference type="jPOST" id="O95292"/>
<dbReference type="MassIVE" id="O95292"/>
<dbReference type="PaxDb" id="9606-ENSP00000417175"/>
<dbReference type="PeptideAtlas" id="O95292"/>
<dbReference type="ProteomicsDB" id="50788">
    <molecule id="O95292-1"/>
</dbReference>
<dbReference type="ProteomicsDB" id="50789">
    <molecule id="O95292-2"/>
</dbReference>
<dbReference type="Pumba" id="O95292"/>
<dbReference type="Antibodypedia" id="2398">
    <property type="antibodies" value="352 antibodies from 33 providers"/>
</dbReference>
<dbReference type="DNASU" id="9217"/>
<dbReference type="YCharOS" id="O95292">
    <property type="antibodies" value="Tested 7 antibodies from 5 manufacturers"/>
</dbReference>
<dbReference type="Ensembl" id="ENST00000395802.7">
    <molecule id="O95292-2"/>
    <property type="protein sequence ID" value="ENSP00000379147.3"/>
    <property type="gene ID" value="ENSG00000124164.16"/>
</dbReference>
<dbReference type="Ensembl" id="ENST00000475243.6">
    <molecule id="O95292-1"/>
    <property type="protein sequence ID" value="ENSP00000417175.1"/>
    <property type="gene ID" value="ENSG00000124164.16"/>
</dbReference>
<dbReference type="GeneID" id="9217"/>
<dbReference type="KEGG" id="hsa:9217"/>
<dbReference type="MANE-Select" id="ENST00000475243.6">
    <property type="protein sequence ID" value="ENSP00000417175.1"/>
    <property type="RefSeq nucleotide sequence ID" value="NM_004738.5"/>
    <property type="RefSeq protein sequence ID" value="NP_004729.1"/>
</dbReference>
<dbReference type="UCSC" id="uc002xzd.3">
    <molecule id="O95292-1"/>
    <property type="organism name" value="human"/>
</dbReference>
<dbReference type="AGR" id="HGNC:12649"/>
<dbReference type="CTD" id="9217"/>
<dbReference type="DisGeNET" id="9217"/>
<dbReference type="GeneCards" id="VAPB"/>
<dbReference type="HGNC" id="HGNC:12649">
    <property type="gene designation" value="VAPB"/>
</dbReference>
<dbReference type="HPA" id="ENSG00000124164">
    <property type="expression patterns" value="Low tissue specificity"/>
</dbReference>
<dbReference type="MalaCards" id="VAPB"/>
<dbReference type="MIM" id="182980">
    <property type="type" value="phenotype"/>
</dbReference>
<dbReference type="MIM" id="605704">
    <property type="type" value="gene"/>
</dbReference>
<dbReference type="MIM" id="608627">
    <property type="type" value="phenotype"/>
</dbReference>
<dbReference type="neXtProt" id="NX_O95292"/>
<dbReference type="OpenTargets" id="ENSG00000124164"/>
<dbReference type="Orphanet" id="803">
    <property type="disease" value="Amyotrophic lateral sclerosis"/>
</dbReference>
<dbReference type="Orphanet" id="209335">
    <property type="disease" value="Autosomal dominant adult-onset proximal spinal muscular atrophy"/>
</dbReference>
<dbReference type="PharmGKB" id="PA37273"/>
<dbReference type="VEuPathDB" id="HostDB:ENSG00000124164"/>
<dbReference type="eggNOG" id="KOG0439">
    <property type="taxonomic scope" value="Eukaryota"/>
</dbReference>
<dbReference type="GeneTree" id="ENSGT00940000155769"/>
<dbReference type="HOGENOM" id="CLU_032848_0_1_1"/>
<dbReference type="InParanoid" id="O95292"/>
<dbReference type="OMA" id="LRCTFEM"/>
<dbReference type="OrthoDB" id="264603at2759"/>
<dbReference type="PAN-GO" id="O95292">
    <property type="GO annotations" value="5 GO annotations based on evolutionary models"/>
</dbReference>
<dbReference type="PhylomeDB" id="O95292"/>
<dbReference type="TreeFam" id="TF317024"/>
<dbReference type="PathwayCommons" id="O95292"/>
<dbReference type="Reactome" id="R-HSA-1660661">
    <property type="pathway name" value="Sphingolipid de novo biosynthesis"/>
</dbReference>
<dbReference type="Reactome" id="R-HSA-8980692">
    <property type="pathway name" value="RHOA GTPase cycle"/>
</dbReference>
<dbReference type="Reactome" id="R-HSA-9013106">
    <property type="pathway name" value="RHOC GTPase cycle"/>
</dbReference>
<dbReference type="Reactome" id="R-HSA-9013404">
    <property type="pathway name" value="RAC2 GTPase cycle"/>
</dbReference>
<dbReference type="Reactome" id="R-HSA-9013405">
    <property type="pathway name" value="RHOD GTPase cycle"/>
</dbReference>
<dbReference type="Reactome" id="R-HSA-9013408">
    <property type="pathway name" value="RHOG GTPase cycle"/>
</dbReference>
<dbReference type="SignaLink" id="O95292"/>
<dbReference type="SIGNOR" id="O95292"/>
<dbReference type="BioGRID-ORCS" id="9217">
    <property type="hits" value="15 hits in 1159 CRISPR screens"/>
</dbReference>
<dbReference type="CD-CODE" id="FB4E32DD">
    <property type="entry name" value="Presynaptic clusters and postsynaptic densities"/>
</dbReference>
<dbReference type="ChiTaRS" id="VAPB">
    <property type="organism name" value="human"/>
</dbReference>
<dbReference type="EvolutionaryTrace" id="O95292"/>
<dbReference type="GeneWiki" id="VAPB"/>
<dbReference type="GenomeRNAi" id="9217"/>
<dbReference type="Pharos" id="O95292">
    <property type="development level" value="Tbio"/>
</dbReference>
<dbReference type="PRO" id="PR:O95292"/>
<dbReference type="Proteomes" id="UP000005640">
    <property type="component" value="Chromosome 20"/>
</dbReference>
<dbReference type="RNAct" id="O95292">
    <property type="molecule type" value="protein"/>
</dbReference>
<dbReference type="Bgee" id="ENSG00000124164">
    <property type="expression patterns" value="Expressed in endothelial cell and 210 other cell types or tissues"/>
</dbReference>
<dbReference type="ExpressionAtlas" id="O95292">
    <property type="expression patterns" value="baseline and differential"/>
</dbReference>
<dbReference type="GO" id="GO:0005737">
    <property type="term" value="C:cytoplasm"/>
    <property type="evidence" value="ECO:0000314"/>
    <property type="project" value="BHF-UCL"/>
</dbReference>
<dbReference type="GO" id="GO:0005783">
    <property type="term" value="C:endoplasmic reticulum"/>
    <property type="evidence" value="ECO:0000314"/>
    <property type="project" value="UniProtKB"/>
</dbReference>
<dbReference type="GO" id="GO:0005789">
    <property type="term" value="C:endoplasmic reticulum membrane"/>
    <property type="evidence" value="ECO:0000314"/>
    <property type="project" value="UniProtKB"/>
</dbReference>
<dbReference type="GO" id="GO:0098978">
    <property type="term" value="C:glutamatergic synapse"/>
    <property type="evidence" value="ECO:0007669"/>
    <property type="project" value="Ensembl"/>
</dbReference>
<dbReference type="GO" id="GO:0005794">
    <property type="term" value="C:Golgi apparatus"/>
    <property type="evidence" value="ECO:0000314"/>
    <property type="project" value="UniProtKB"/>
</dbReference>
<dbReference type="GO" id="GO:0005886">
    <property type="term" value="C:plasma membrane"/>
    <property type="evidence" value="ECO:0000318"/>
    <property type="project" value="GO_Central"/>
</dbReference>
<dbReference type="GO" id="GO:0098794">
    <property type="term" value="C:postsynapse"/>
    <property type="evidence" value="ECO:0007669"/>
    <property type="project" value="Ensembl"/>
</dbReference>
<dbReference type="GO" id="GO:0098793">
    <property type="term" value="C:presynapse"/>
    <property type="evidence" value="ECO:0007669"/>
    <property type="project" value="Ensembl"/>
</dbReference>
<dbReference type="GO" id="GO:0048487">
    <property type="term" value="F:beta-tubulin binding"/>
    <property type="evidence" value="ECO:0000314"/>
    <property type="project" value="UniProtKB"/>
</dbReference>
<dbReference type="GO" id="GO:0045296">
    <property type="term" value="F:cadherin binding"/>
    <property type="evidence" value="ECO:0007005"/>
    <property type="project" value="BHF-UCL"/>
</dbReference>
<dbReference type="GO" id="GO:0019899">
    <property type="term" value="F:enzyme binding"/>
    <property type="evidence" value="ECO:0000353"/>
    <property type="project" value="UniProtKB"/>
</dbReference>
<dbReference type="GO" id="GO:0033149">
    <property type="term" value="F:FFAT motif binding"/>
    <property type="evidence" value="ECO:0000314"/>
    <property type="project" value="UniProtKB"/>
</dbReference>
<dbReference type="GO" id="GO:0008017">
    <property type="term" value="F:microtubule binding"/>
    <property type="evidence" value="ECO:0000314"/>
    <property type="project" value="UniProtKB"/>
</dbReference>
<dbReference type="GO" id="GO:0046982">
    <property type="term" value="F:protein heterodimerization activity"/>
    <property type="evidence" value="ECO:0000353"/>
    <property type="project" value="UniProtKB"/>
</dbReference>
<dbReference type="GO" id="GO:0042803">
    <property type="term" value="F:protein homodimerization activity"/>
    <property type="evidence" value="ECO:0000353"/>
    <property type="project" value="UniProtKB"/>
</dbReference>
<dbReference type="GO" id="GO:0043495">
    <property type="term" value="F:protein-membrane adaptor activity"/>
    <property type="evidence" value="ECO:0000318"/>
    <property type="project" value="GO_Central"/>
</dbReference>
<dbReference type="GO" id="GO:0030301">
    <property type="term" value="P:cholesterol transport"/>
    <property type="evidence" value="ECO:0000314"/>
    <property type="project" value="UniProtKB"/>
</dbReference>
<dbReference type="GO" id="GO:0090114">
    <property type="term" value="P:COPII-coated vesicle budding"/>
    <property type="evidence" value="ECO:0000315"/>
    <property type="project" value="UniProtKB"/>
</dbReference>
<dbReference type="GO" id="GO:0090158">
    <property type="term" value="P:endoplasmic reticulum membrane organization"/>
    <property type="evidence" value="ECO:0000318"/>
    <property type="project" value="GO_Central"/>
</dbReference>
<dbReference type="GO" id="GO:0007029">
    <property type="term" value="P:endoplasmic reticulum organization"/>
    <property type="evidence" value="ECO:0000315"/>
    <property type="project" value="UniProtKB"/>
</dbReference>
<dbReference type="GO" id="GO:0006888">
    <property type="term" value="P:endoplasmic reticulum to Golgi vesicle-mediated transport"/>
    <property type="evidence" value="ECO:0000315"/>
    <property type="project" value="UniProtKB"/>
</dbReference>
<dbReference type="GO" id="GO:0030968">
    <property type="term" value="P:endoplasmic reticulum unfolded protein response"/>
    <property type="evidence" value="ECO:0000315"/>
    <property type="project" value="UniProtKB"/>
</dbReference>
<dbReference type="GO" id="GO:0061817">
    <property type="term" value="P:endoplasmic reticulum-plasma membrane tethering"/>
    <property type="evidence" value="ECO:0000318"/>
    <property type="project" value="GO_Central"/>
</dbReference>
<dbReference type="GO" id="GO:0006874">
    <property type="term" value="P:intracellular calcium ion homeostasis"/>
    <property type="evidence" value="ECO:0000315"/>
    <property type="project" value="UniProtKB"/>
</dbReference>
<dbReference type="GO" id="GO:0036498">
    <property type="term" value="P:IRE1-mediated unfolded protein response"/>
    <property type="evidence" value="ECO:0000314"/>
    <property type="project" value="UniProtKB"/>
</dbReference>
<dbReference type="GO" id="GO:0044830">
    <property type="term" value="P:modulation by host of viral RNA genome replication"/>
    <property type="evidence" value="ECO:0000314"/>
    <property type="project" value="AgBase"/>
</dbReference>
<dbReference type="GO" id="GO:0044828">
    <property type="term" value="P:negative regulation by host of viral genome replication"/>
    <property type="evidence" value="ECO:0000314"/>
    <property type="project" value="AgBase"/>
</dbReference>
<dbReference type="GO" id="GO:0046725">
    <property type="term" value="P:negative regulation by virus of viral protein levels in host cell"/>
    <property type="evidence" value="ECO:0000314"/>
    <property type="project" value="AgBase"/>
</dbReference>
<dbReference type="GO" id="GO:0044829">
    <property type="term" value="P:positive regulation by host of viral genome replication"/>
    <property type="evidence" value="ECO:0000314"/>
    <property type="project" value="AgBase"/>
</dbReference>
<dbReference type="GO" id="GO:0045070">
    <property type="term" value="P:positive regulation of viral genome replication"/>
    <property type="evidence" value="ECO:0000315"/>
    <property type="project" value="UniProtKB"/>
</dbReference>
<dbReference type="GO" id="GO:0044790">
    <property type="term" value="P:suppression of viral release by host"/>
    <property type="evidence" value="ECO:0000314"/>
    <property type="project" value="AgBase"/>
</dbReference>
<dbReference type="GO" id="GO:0019076">
    <property type="term" value="P:viral release from host cell"/>
    <property type="evidence" value="ECO:0000314"/>
    <property type="project" value="AgBase"/>
</dbReference>
<dbReference type="DisProt" id="DP01248"/>
<dbReference type="FunFam" id="2.60.40.10:FF:000334">
    <property type="entry name" value="vesicle-associated membrane protein-associated protein A isoform X1"/>
    <property type="match status" value="1"/>
</dbReference>
<dbReference type="Gene3D" id="2.60.40.10">
    <property type="entry name" value="Immunoglobulins"/>
    <property type="match status" value="1"/>
</dbReference>
<dbReference type="InterPro" id="IPR013783">
    <property type="entry name" value="Ig-like_fold"/>
</dbReference>
<dbReference type="InterPro" id="IPR000535">
    <property type="entry name" value="MSP_dom"/>
</dbReference>
<dbReference type="InterPro" id="IPR008962">
    <property type="entry name" value="PapD-like_sf"/>
</dbReference>
<dbReference type="InterPro" id="IPR016763">
    <property type="entry name" value="VAP"/>
</dbReference>
<dbReference type="PANTHER" id="PTHR10809">
    <property type="entry name" value="VESICLE-ASSOCIATED MEMBRANE PROTEIN-ASSOCIATED PROTEIN"/>
    <property type="match status" value="1"/>
</dbReference>
<dbReference type="PANTHER" id="PTHR10809:SF12">
    <property type="entry name" value="VESICLE-ASSOCIATED MEMBRANE PROTEIN-ASSOCIATED PROTEIN B_C"/>
    <property type="match status" value="1"/>
</dbReference>
<dbReference type="Pfam" id="PF00635">
    <property type="entry name" value="Motile_Sperm"/>
    <property type="match status" value="1"/>
</dbReference>
<dbReference type="PIRSF" id="PIRSF019693">
    <property type="entry name" value="VAMP-associated"/>
    <property type="match status" value="1"/>
</dbReference>
<dbReference type="SUPFAM" id="SSF49354">
    <property type="entry name" value="PapD-like"/>
    <property type="match status" value="1"/>
</dbReference>
<dbReference type="PROSITE" id="PS50202">
    <property type="entry name" value="MSP"/>
    <property type="match status" value="1"/>
</dbReference>
<comment type="function">
    <text evidence="7 10 12 18 19">Endoplasmic reticulum (ER)-anchored protein that mediates the formation of contact sites between the ER and endosomes via interaction with FFAT motif-containing proteins such as STARD3 or WDR44 (PubMed:32344433, PubMed:33124732). Interacts with STARD3 in a FFAT motif phosphorylation dependent manner (PubMed:33124732). Via interaction with WDR44 participates in neosynthesized protein export (PubMed:32344433). Participates in the endoplasmic reticulum unfolded protein response (UPR) by inducing ERN1/IRE1 activity (PubMed:16891305, PubMed:20940299). Involved in cellular calcium homeostasis regulation (PubMed:22131369).</text>
</comment>
<comment type="subunit">
    <text evidence="6 8 9 10 11 12 14 16 17 18 19 20">Homodimer, and heterodimer with VAPA (PubMed:20940299). Interacts with VAMP1 and VAMP2 (PubMed:20940299, PubMed:9920726). Interacts (via MSP domain) with ZFYVE27 (PubMed:19289470, PubMed:21976701). Interacts with RMDN3 (PubMed:22131369). Interacts with KIF5A in a ZFYVE27-dependent manner (PubMed:21976701). Interacts (via MSP domain) with STARD3 (via phospho-FFAT motif) (PubMed:24105263, PubMed:33124732). Interacts with STARD3NL (via FFAT motif) (PubMed:24105263). Interacts with CERT1 (PubMed:16895911). Interacts with PLEKHA3 and SACM1L to form a ternary complex (PubMed:30659099). Interacts with VPS13A (via FFAT motif) (PubMed:30741634). Interacts with RB1CC1 (via phosphorylated FFAT motif), MIGA2 (via phosphorylated FFAT motif), RMDN3 (via phosphorylated FFAT motif), OSBPL1A (via FFAT motif), KCNB1 (via phosphorylated FFAT motif) and KCNB2 (via phosphorylated FFAT motif) (PubMed:33124732). Interacts (via MSP domain) with WDR44 (via FFAT motif); the interactions connect the endoplasmic reticulum (ER) with the endosomal tubule (PubMed:32344433).</text>
</comment>
<comment type="subunit">
    <text evidence="6 13">(Microbial infection) Interacts (via MSP domain) with hepatitis C virus (HCV) non-structural protein 5A (via disordered domain D3) (PubMed:16227268, PubMed:22720086). Interacts with HCV RNA-directed RNA polymerase (PubMed:16227268).</text>
</comment>
<comment type="interaction">
    <interactant intactId="EBI-1188298">
        <id>O95292</id>
    </interactant>
    <interactant intactId="EBI-11957045">
        <id>Q9NVV5-2</id>
        <label>AIG1</label>
    </interactant>
    <organismsDiffer>false</organismsDiffer>
    <experiments>3</experiments>
</comment>
<comment type="interaction">
    <interactant intactId="EBI-1188298">
        <id>O95292</id>
    </interactant>
    <interactant intactId="EBI-11529439">
        <id>P63010-2</id>
        <label>AP2B1</label>
    </interactant>
    <organismsDiffer>false</organismsDiffer>
    <experiments>3</experiments>
</comment>
<comment type="interaction">
    <interactant intactId="EBI-1188298">
        <id>O95292</id>
    </interactant>
    <interactant intactId="EBI-13059134">
        <id>Q13520</id>
        <label>AQP6</label>
    </interactant>
    <organismsDiffer>false</organismsDiffer>
    <experiments>3</experiments>
</comment>
<comment type="interaction">
    <interactant intactId="EBI-1188298">
        <id>O95292</id>
    </interactant>
    <interactant intactId="EBI-10186132">
        <id>Q0P5N6</id>
        <label>ARL16</label>
    </interactant>
    <organismsDiffer>false</organismsDiffer>
    <experiments>3</experiments>
</comment>
<comment type="interaction">
    <interactant intactId="EBI-1188298">
        <id>O95292</id>
    </interactant>
    <interactant intactId="EBI-7797864">
        <id>P11912</id>
        <label>CD79A</label>
    </interactant>
    <organismsDiffer>false</organismsDiffer>
    <experiments>3</experiments>
</comment>
<comment type="interaction">
    <interactant intactId="EBI-1188298">
        <id>O95292</id>
    </interactant>
    <interactant intactId="EBI-349854">
        <id>P13569</id>
        <label>CFTR</label>
    </interactant>
    <organismsDiffer>false</organismsDiffer>
    <experiments>12</experiments>
</comment>
<comment type="interaction">
    <interactant intactId="EBI-1188298">
        <id>O95292</id>
    </interactant>
    <interactant intactId="EBI-8646596">
        <id>P49447</id>
        <label>CYB561</label>
    </interactant>
    <organismsDiffer>false</organismsDiffer>
    <experiments>3</experiments>
</comment>
<comment type="interaction">
    <interactant intactId="EBI-1188298">
        <id>O95292</id>
    </interactant>
    <interactant intactId="EBI-8637742">
        <id>Q53TN4</id>
        <label>CYBRD1</label>
    </interactant>
    <organismsDiffer>false</organismsDiffer>
    <experiments>3</experiments>
</comment>
<comment type="interaction">
    <interactant intactId="EBI-1188298">
        <id>O95292</id>
    </interactant>
    <interactant intactId="EBI-8787095">
        <id>O00559</id>
        <label>EBAG9</label>
    </interactant>
    <organismsDiffer>false</organismsDiffer>
    <experiments>3</experiments>
</comment>
<comment type="interaction">
    <interactant intactId="EBI-1188298">
        <id>O95292</id>
    </interactant>
    <interactant intactId="EBI-3915253">
        <id>Q15125</id>
        <label>EBP</label>
    </interactant>
    <organismsDiffer>false</organismsDiffer>
    <experiments>3</experiments>
</comment>
<comment type="interaction">
    <interactant intactId="EBI-1188298">
        <id>O95292</id>
    </interactant>
    <interactant intactId="EBI-18535450">
        <id>Q9GZR5</id>
        <label>ELOVL4</label>
    </interactant>
    <organismsDiffer>false</organismsDiffer>
    <experiments>3</experiments>
</comment>
<comment type="interaction">
    <interactant intactId="EBI-1188298">
        <id>O95292</id>
    </interactant>
    <interactant intactId="EBI-489887">
        <id>P50402</id>
        <label>EMD</label>
    </interactant>
    <organismsDiffer>false</organismsDiffer>
    <experiments>4</experiments>
</comment>
<comment type="interaction">
    <interactant intactId="EBI-1188298">
        <id>O95292</id>
    </interactant>
    <interactant intactId="EBI-18636064">
        <id>Q8TBP5</id>
        <label>FAM174A</label>
    </interactant>
    <organismsDiffer>false</organismsDiffer>
    <experiments>3</experiments>
</comment>
<comment type="interaction">
    <interactant intactId="EBI-1188298">
        <id>O95292</id>
    </interactant>
    <interactant intactId="EBI-10178951">
        <id>O00155</id>
        <label>GPR25</label>
    </interactant>
    <organismsDiffer>false</organismsDiffer>
    <experiments>3</experiments>
</comment>
<comment type="interaction">
    <interactant intactId="EBI-1188298">
        <id>O95292</id>
    </interactant>
    <interactant intactId="EBI-18053395">
        <id>Q7Z5P4</id>
        <label>HSD17B13</label>
    </interactant>
    <organismsDiffer>false</organismsDiffer>
    <experiments>3</experiments>
</comment>
<comment type="interaction">
    <interactant intactId="EBI-1188298">
        <id>O95292</id>
    </interactant>
    <interactant intactId="EBI-10266796">
        <id>Q8N5M9</id>
        <label>JAGN1</label>
    </interactant>
    <organismsDiffer>false</organismsDiffer>
    <experiments>3</experiments>
</comment>
<comment type="interaction">
    <interactant intactId="EBI-1188298">
        <id>O95292</id>
    </interactant>
    <interactant intactId="EBI-1044640">
        <id>Q9BYQ4</id>
        <label>KRTAP9-2</label>
    </interactant>
    <organismsDiffer>false</organismsDiffer>
    <experiments>3</experiments>
</comment>
<comment type="interaction">
    <interactant intactId="EBI-1188298">
        <id>O95292</id>
    </interactant>
    <interactant intactId="EBI-765918">
        <id>Q9BXW6</id>
        <label>OSBPL1A</label>
    </interactant>
    <organismsDiffer>false</organismsDiffer>
    <experiments>7</experiments>
</comment>
<comment type="interaction">
    <interactant intactId="EBI-1188298">
        <id>O95292</id>
    </interactant>
    <interactant intactId="EBI-2828285">
        <id>Q9H1P3</id>
        <label>OSBPL2</label>
    </interactant>
    <organismsDiffer>false</organismsDiffer>
    <experiments>4</experiments>
</comment>
<comment type="interaction">
    <interactant intactId="EBI-1188298">
        <id>O95292</id>
    </interactant>
    <interactant intactId="EBI-11161398">
        <id>O14684</id>
        <label>PTGES</label>
    </interactant>
    <organismsDiffer>false</organismsDiffer>
    <experiments>3</experiments>
</comment>
<comment type="interaction">
    <interactant intactId="EBI-1188298">
        <id>O95292</id>
    </interactant>
    <interactant intactId="EBI-7545592">
        <id>Q9H6H4</id>
        <label>REEP4</label>
    </interactant>
    <organismsDiffer>false</organismsDiffer>
    <experiments>3</experiments>
</comment>
<comment type="interaction">
    <interactant intactId="EBI-1188298">
        <id>O95292</id>
    </interactant>
    <interactant intactId="EBI-10192441">
        <id>Q86VR2</id>
        <label>RETREG3</label>
    </interactant>
    <organismsDiffer>false</organismsDiffer>
    <experiments>3</experiments>
</comment>
<comment type="interaction">
    <interactant intactId="EBI-1188298">
        <id>O95292</id>
    </interactant>
    <interactant intactId="EBI-2806908">
        <id>Q96LZ7</id>
        <label>RMDN2</label>
    </interactant>
    <organismsDiffer>false</organismsDiffer>
    <experiments>8</experiments>
</comment>
<comment type="interaction">
    <interactant intactId="EBI-1188298">
        <id>O95292</id>
    </interactant>
    <interactant intactId="EBI-18397230">
        <id>Q6P5S7</id>
        <label>RNASEK</label>
    </interactant>
    <organismsDiffer>false</organismsDiffer>
    <experiments>3</experiments>
</comment>
<comment type="interaction">
    <interactant intactId="EBI-1188298">
        <id>O95292</id>
    </interactant>
    <interactant intactId="EBI-17247926">
        <id>Q9NY72</id>
        <label>SCN3B</label>
    </interactant>
    <organismsDiffer>false</organismsDiffer>
    <experiments>3</experiments>
</comment>
<comment type="interaction">
    <interactant intactId="EBI-1188298">
        <id>O95292</id>
    </interactant>
    <interactant intactId="EBI-727004">
        <id>O00560</id>
        <label>SDCBP</label>
    </interactant>
    <organismsDiffer>false</organismsDiffer>
    <experiments>3</experiments>
</comment>
<comment type="interaction">
    <interactant intactId="EBI-1188298">
        <id>O95292</id>
    </interactant>
    <interactant intactId="EBI-358545">
        <id>Q9GZS3</id>
        <label>SKIC8</label>
    </interactant>
    <organismsDiffer>false</organismsDiffer>
    <experiments>3</experiments>
</comment>
<comment type="interaction">
    <interactant intactId="EBI-1188298">
        <id>O95292</id>
    </interactant>
    <interactant intactId="EBI-17295964">
        <id>Q9NQQ7-3</id>
        <label>SLC35C2</label>
    </interactant>
    <organismsDiffer>false</organismsDiffer>
    <experiments>3</experiments>
</comment>
<comment type="interaction">
    <interactant intactId="EBI-1188298">
        <id>O95292</id>
    </interactant>
    <interactant intactId="EBI-3922699">
        <id>Q96IK0</id>
        <label>TMEM101</label>
    </interactant>
    <organismsDiffer>false</organismsDiffer>
    <experiments>3</experiments>
</comment>
<comment type="interaction">
    <interactant intactId="EBI-1188298">
        <id>O95292</id>
    </interactant>
    <interactant intactId="EBI-8787626">
        <id>Q8N6L7</id>
        <label>TMEM252</label>
    </interactant>
    <organismsDiffer>false</organismsDiffer>
    <experiments>3</experiments>
</comment>
<comment type="interaction">
    <interactant intactId="EBI-1188298">
        <id>O95292</id>
    </interactant>
    <interactant intactId="EBI-6447886">
        <id>Q9Y320</id>
        <label>TMX2</label>
    </interactant>
    <organismsDiffer>false</organismsDiffer>
    <experiments>3</experiments>
</comment>
<comment type="interaction">
    <interactant intactId="EBI-1188298">
        <id>O95292</id>
    </interactant>
    <interactant intactId="EBI-4289975">
        <id>Q5VTQ0</id>
        <label>TTC39B</label>
    </interactant>
    <organismsDiffer>false</organismsDiffer>
    <experiments>6</experiments>
</comment>
<comment type="interaction">
    <interactant intactId="EBI-1188298">
        <id>O95292</id>
    </interactant>
    <interactant intactId="EBI-2511991">
        <id>Q9Y2K6</id>
        <label>USP20</label>
    </interactant>
    <organismsDiffer>false</organismsDiffer>
    <experiments>9</experiments>
</comment>
<comment type="interaction">
    <interactant intactId="EBI-1188298">
        <id>O95292</id>
    </interactant>
    <interactant intactId="EBI-1059156">
        <id>Q9P0L0</id>
        <label>VAPA</label>
    </interactant>
    <organismsDiffer>false</organismsDiffer>
    <experiments>8</experiments>
</comment>
<comment type="interaction">
    <interactant intactId="EBI-1188298">
        <id>O95292</id>
    </interactant>
    <interactant intactId="EBI-2799703">
        <id>O95070</id>
        <label>YIF1A</label>
    </interactant>
    <organismsDiffer>false</organismsDiffer>
    <experiments>9</experiments>
</comment>
<comment type="interaction">
    <interactant intactId="EBI-1188298">
        <id>O95292</id>
    </interactant>
    <interactant intactId="EBI-723574">
        <id>O15209</id>
        <label>ZBTB22</label>
    </interactant>
    <organismsDiffer>false</organismsDiffer>
    <experiments>3</experiments>
</comment>
<comment type="interaction">
    <interactant intactId="EBI-1188298">
        <id>O95292</id>
    </interactant>
    <interactant intactId="EBI-12837904">
        <id>Q96MV8</id>
        <label>ZDHHC15</label>
    </interactant>
    <organismsDiffer>false</organismsDiffer>
    <experiments>3</experiments>
</comment>
<comment type="interaction">
    <interactant intactId="EBI-1188298">
        <id>O95292</id>
    </interactant>
    <interactant intactId="EBI-3892947">
        <id>Q5T4F4</id>
        <label>ZFYVE27</label>
    </interactant>
    <organismsDiffer>false</organismsDiffer>
    <experiments>2</experiments>
</comment>
<comment type="interaction">
    <interactant intactId="EBI-1188298">
        <id>O95292</id>
    </interactant>
    <interactant intactId="EBI-1539152">
        <id>Q03137</id>
        <label>Epha4</label>
    </interactant>
    <organismsDiffer>true</organismsDiffer>
    <experiments>2</experiments>
</comment>
<comment type="interaction">
    <interactant intactId="EBI-1188298">
        <id>O95292</id>
    </interactant>
    <interactant intactId="EBI-8803426">
        <id>PRO_0000278740</id>
        <dbReference type="UniProtKB" id="Q03463"/>
    </interactant>
    <organismsDiffer>true</organismsDiffer>
    <experiments>6</experiments>
</comment>
<comment type="interaction">
    <interactant intactId="EBI-1188298">
        <id>O95292</id>
    </interactant>
    <interactant intactId="EBI-9096996">
        <id>PRO_0000045600</id>
        <dbReference type="UniProtKB" id="Q99IB8"/>
    </interactant>
    <organismsDiffer>true</organismsDiffer>
    <experiments>2</experiments>
</comment>
<comment type="interaction">
    <interactant intactId="EBI-9350848">
        <id>O95292-1</id>
    </interactant>
    <interactant intactId="EBI-1059156">
        <id>Q9P0L0</id>
        <label>VAPA</label>
    </interactant>
    <organismsDiffer>false</organismsDiffer>
    <experiments>2</experiments>
</comment>
<comment type="interaction">
    <interactant intactId="EBI-9350848">
        <id>O95292-1</id>
    </interactant>
    <interactant intactId="EBI-8803474">
        <id>PRO_0000278741</id>
        <dbReference type="UniProtKB" id="Q03463"/>
    </interactant>
    <organismsDiffer>true</organismsDiffer>
    <experiments>2</experiments>
</comment>
<comment type="interaction">
    <interactant intactId="EBI-9350855">
        <id>O95292-2</id>
    </interactant>
    <interactant intactId="EBI-8803474">
        <id>PRO_0000278741</id>
        <dbReference type="UniProtKB" id="Q03463"/>
    </interactant>
    <organismsDiffer>true</organismsDiffer>
    <experiments>3</experiments>
</comment>
<comment type="subcellular location">
    <subcellularLocation>
        <location evidence="18 19">Endoplasmic reticulum membrane</location>
        <topology evidence="1">Single-pass type IV membrane protein</topology>
    </subcellularLocation>
    <text evidence="12">Present in mitochondria-associated membranes that are endoplasmic reticulum membrane regions closely apposed to the outer mitochondrial membrane.</text>
</comment>
<comment type="alternative products">
    <event type="alternative splicing"/>
    <isoform>
        <id>O95292-1</id>
        <name>1</name>
        <name>VAP-B</name>
        <sequence type="displayed"/>
    </isoform>
    <isoform>
        <id>O95292-2</id>
        <name>2</name>
        <name>VAP-C</name>
        <sequence type="described" ref="VSP_003277 VSP_003278"/>
    </isoform>
</comment>
<comment type="tissue specificity">
    <text>Ubiquitous. Isoform 1 predominates.</text>
</comment>
<comment type="domain">
    <text evidence="18">The MSP domain binds the FFAT motif of many proteins.</text>
</comment>
<comment type="disease" evidence="5 7 10 12">
    <disease id="DI-00112">
        <name>Amyotrophic lateral sclerosis 8</name>
        <acronym>ALS8</acronym>
        <description>A neurodegenerative disorder affecting upper motor neurons in the brain and lower motor neurons in the brain stem and spinal cord, resulting in fatal paralysis. Sensory abnormalities are absent. The pathologic hallmarks of the disease include pallor of the corticospinal tract due to loss of motor neurons, presence of ubiquitin-positive inclusions within surviving motor neurons, and deposition of pathologic aggregates. The etiology of amyotrophic lateral sclerosis is likely to be multifactorial, involving both genetic and environmental factors. The disease is inherited in 5-10% of the cases.</description>
        <dbReference type="MIM" id="608627"/>
    </disease>
    <text>The disease is caused by variants affecting the gene represented in this entry.</text>
</comment>
<comment type="disease" evidence="5">
    <disease id="DI-01054">
        <name>Spinal muscular atrophy, proximal, adult, autosomal dominant</name>
        <acronym>SMAPAD</acronym>
        <description>A form of spinal muscular atrophy, a neuromuscular disorder characterized by degeneration of the anterior horn cells of the spinal cord, leading to symmetrical muscle weakness and atrophy. SMAPAD is characterized by proximal muscle weakness that begins in the lower limbs and then progresses to upper limbs, onset in late adulthood (after third decade) and a benign course. Most of the patients remain ambulatory 10 to 40 years after clinical onset.</description>
        <dbReference type="MIM" id="182980"/>
    </disease>
    <text>The disease is caused by variants affecting the gene represented in this entry.</text>
</comment>
<comment type="similarity">
    <text evidence="22">Belongs to the VAMP-associated protein (VAP) (TC 9.B.17) family.</text>
</comment>
<comment type="online information" name="Alsod">
    <link uri="https://alsod.ac.uk"/>
    <text>ALS genetic mutations db</text>
</comment>
<comment type="online information" name="Mendelian genes VAMP (vesicle-associated membrane protein)-associated protein B and C (VAPB)">
    <link uri="https://databases.lovd.nl/shared/genes/VAPB"/>
    <text>Leiden Open Variation Database (LOVD)</text>
</comment>
<gene>
    <name evidence="23" type="primary">VAPB</name>
    <name type="ORF">UNQ484/PRO983</name>
</gene>
<reference key="1">
    <citation type="journal article" date="1999" name="Biochem. Biophys. Res. Commun.">
        <title>Molecular cloning and characterization of mammalian homologues of vesicle-associated membrane protein-associated (VAMP-associated) proteins.</title>
        <authorList>
            <person name="Nishimura Y."/>
            <person name="Hayashi M."/>
            <person name="Inada H."/>
            <person name="Tanaka T."/>
        </authorList>
    </citation>
    <scope>NUCLEOTIDE SEQUENCE [MRNA] (ISOFORMS 1 AND 2)</scope>
    <scope>INTERACTION WITH VAPA; VAMP1 AND VAMP2</scope>
    <source>
        <tissue>Brain</tissue>
        <tissue>Heart</tissue>
    </source>
</reference>
<reference key="2">
    <citation type="journal article" date="2000" name="Proc. Natl. Acad. Sci. U.S.A.">
        <title>Gene expression profiling in the human hypothalamus-pituitary-adrenal axis and full-length cDNA cloning.</title>
        <authorList>
            <person name="Hu R.-M."/>
            <person name="Han Z.-G."/>
            <person name="Song H.-D."/>
            <person name="Peng Y.-D."/>
            <person name="Huang Q.-H."/>
            <person name="Ren S.-X."/>
            <person name="Gu Y.-J."/>
            <person name="Huang C.-H."/>
            <person name="Li Y.-B."/>
            <person name="Jiang C.-L."/>
            <person name="Fu G."/>
            <person name="Zhang Q.-H."/>
            <person name="Gu B.-W."/>
            <person name="Dai M."/>
            <person name="Mao Y.-F."/>
            <person name="Gao G.-F."/>
            <person name="Rong R."/>
            <person name="Ye M."/>
            <person name="Zhou J."/>
            <person name="Xu S.-H."/>
            <person name="Gu J."/>
            <person name="Shi J.-X."/>
            <person name="Jin W.-R."/>
            <person name="Zhang C.-K."/>
            <person name="Wu T.-M."/>
            <person name="Huang G.-Y."/>
            <person name="Chen Z."/>
            <person name="Chen M.-D."/>
            <person name="Chen J.-L."/>
        </authorList>
    </citation>
    <scope>NUCLEOTIDE SEQUENCE [LARGE SCALE MRNA] (ISOFORM 1)</scope>
    <source>
        <tissue>Adrenal gland</tissue>
    </source>
</reference>
<reference key="3">
    <citation type="journal article" date="2003" name="Genome Res.">
        <title>The secreted protein discovery initiative (SPDI), a large-scale effort to identify novel human secreted and transmembrane proteins: a bioinformatics assessment.</title>
        <authorList>
            <person name="Clark H.F."/>
            <person name="Gurney A.L."/>
            <person name="Abaya E."/>
            <person name="Baker K."/>
            <person name="Baldwin D.T."/>
            <person name="Brush J."/>
            <person name="Chen J."/>
            <person name="Chow B."/>
            <person name="Chui C."/>
            <person name="Crowley C."/>
            <person name="Currell B."/>
            <person name="Deuel B."/>
            <person name="Dowd P."/>
            <person name="Eaton D."/>
            <person name="Foster J.S."/>
            <person name="Grimaldi C."/>
            <person name="Gu Q."/>
            <person name="Hass P.E."/>
            <person name="Heldens S."/>
            <person name="Huang A."/>
            <person name="Kim H.S."/>
            <person name="Klimowski L."/>
            <person name="Jin Y."/>
            <person name="Johnson S."/>
            <person name="Lee J."/>
            <person name="Lewis L."/>
            <person name="Liao D."/>
            <person name="Mark M.R."/>
            <person name="Robbie E."/>
            <person name="Sanchez C."/>
            <person name="Schoenfeld J."/>
            <person name="Seshagiri S."/>
            <person name="Simmons L."/>
            <person name="Singh J."/>
            <person name="Smith V."/>
            <person name="Stinson J."/>
            <person name="Vagts A."/>
            <person name="Vandlen R.L."/>
            <person name="Watanabe C."/>
            <person name="Wieand D."/>
            <person name="Woods K."/>
            <person name="Xie M.-H."/>
            <person name="Yansura D.G."/>
            <person name="Yi S."/>
            <person name="Yu G."/>
            <person name="Yuan J."/>
            <person name="Zhang M."/>
            <person name="Zhang Z."/>
            <person name="Goddard A.D."/>
            <person name="Wood W.I."/>
            <person name="Godowski P.J."/>
            <person name="Gray A.M."/>
        </authorList>
    </citation>
    <scope>NUCLEOTIDE SEQUENCE [LARGE SCALE MRNA] (ISOFORM 1)</scope>
</reference>
<reference key="4">
    <citation type="journal article" date="2001" name="Nature">
        <title>The DNA sequence and comparative analysis of human chromosome 20.</title>
        <authorList>
            <person name="Deloukas P."/>
            <person name="Matthews L.H."/>
            <person name="Ashurst J.L."/>
            <person name="Burton J."/>
            <person name="Gilbert J.G.R."/>
            <person name="Jones M."/>
            <person name="Stavrides G."/>
            <person name="Almeida J.P."/>
            <person name="Babbage A.K."/>
            <person name="Bagguley C.L."/>
            <person name="Bailey J."/>
            <person name="Barlow K.F."/>
            <person name="Bates K.N."/>
            <person name="Beard L.M."/>
            <person name="Beare D.M."/>
            <person name="Beasley O.P."/>
            <person name="Bird C.P."/>
            <person name="Blakey S.E."/>
            <person name="Bridgeman A.M."/>
            <person name="Brown A.J."/>
            <person name="Buck D."/>
            <person name="Burrill W.D."/>
            <person name="Butler A.P."/>
            <person name="Carder C."/>
            <person name="Carter N.P."/>
            <person name="Chapman J.C."/>
            <person name="Clamp M."/>
            <person name="Clark G."/>
            <person name="Clark L.N."/>
            <person name="Clark S.Y."/>
            <person name="Clee C.M."/>
            <person name="Clegg S."/>
            <person name="Cobley V.E."/>
            <person name="Collier R.E."/>
            <person name="Connor R.E."/>
            <person name="Corby N.R."/>
            <person name="Coulson A."/>
            <person name="Coville G.J."/>
            <person name="Deadman R."/>
            <person name="Dhami P.D."/>
            <person name="Dunn M."/>
            <person name="Ellington A.G."/>
            <person name="Frankland J.A."/>
            <person name="Fraser A."/>
            <person name="French L."/>
            <person name="Garner P."/>
            <person name="Grafham D.V."/>
            <person name="Griffiths C."/>
            <person name="Griffiths M.N.D."/>
            <person name="Gwilliam R."/>
            <person name="Hall R.E."/>
            <person name="Hammond S."/>
            <person name="Harley J.L."/>
            <person name="Heath P.D."/>
            <person name="Ho S."/>
            <person name="Holden J.L."/>
            <person name="Howden P.J."/>
            <person name="Huckle E."/>
            <person name="Hunt A.R."/>
            <person name="Hunt S.E."/>
            <person name="Jekosch K."/>
            <person name="Johnson C.M."/>
            <person name="Johnson D."/>
            <person name="Kay M.P."/>
            <person name="Kimberley A.M."/>
            <person name="King A."/>
            <person name="Knights A."/>
            <person name="Laird G.K."/>
            <person name="Lawlor S."/>
            <person name="Lehvaeslaiho M.H."/>
            <person name="Leversha M.A."/>
            <person name="Lloyd C."/>
            <person name="Lloyd D.M."/>
            <person name="Lovell J.D."/>
            <person name="Marsh V.L."/>
            <person name="Martin S.L."/>
            <person name="McConnachie L.J."/>
            <person name="McLay K."/>
            <person name="McMurray A.A."/>
            <person name="Milne S.A."/>
            <person name="Mistry D."/>
            <person name="Moore M.J.F."/>
            <person name="Mullikin J.C."/>
            <person name="Nickerson T."/>
            <person name="Oliver K."/>
            <person name="Parker A."/>
            <person name="Patel R."/>
            <person name="Pearce T.A.V."/>
            <person name="Peck A.I."/>
            <person name="Phillimore B.J.C.T."/>
            <person name="Prathalingam S.R."/>
            <person name="Plumb R.W."/>
            <person name="Ramsay H."/>
            <person name="Rice C.M."/>
            <person name="Ross M.T."/>
            <person name="Scott C.E."/>
            <person name="Sehra H.K."/>
            <person name="Shownkeen R."/>
            <person name="Sims S."/>
            <person name="Skuce C.D."/>
            <person name="Smith M.L."/>
            <person name="Soderlund C."/>
            <person name="Steward C.A."/>
            <person name="Sulston J.E."/>
            <person name="Swann R.M."/>
            <person name="Sycamore N."/>
            <person name="Taylor R."/>
            <person name="Tee L."/>
            <person name="Thomas D.W."/>
            <person name="Thorpe A."/>
            <person name="Tracey A."/>
            <person name="Tromans A.C."/>
            <person name="Vaudin M."/>
            <person name="Wall M."/>
            <person name="Wallis J.M."/>
            <person name="Whitehead S.L."/>
            <person name="Whittaker P."/>
            <person name="Willey D.L."/>
            <person name="Williams L."/>
            <person name="Williams S.A."/>
            <person name="Wilming L."/>
            <person name="Wray P.W."/>
            <person name="Hubbard T."/>
            <person name="Durbin R.M."/>
            <person name="Bentley D.R."/>
            <person name="Beck S."/>
            <person name="Rogers J."/>
        </authorList>
    </citation>
    <scope>NUCLEOTIDE SEQUENCE [LARGE SCALE GENOMIC DNA]</scope>
</reference>
<reference key="5">
    <citation type="journal article" date="2004" name="Genome Res.">
        <title>The status, quality, and expansion of the NIH full-length cDNA project: the Mammalian Gene Collection (MGC).</title>
        <authorList>
            <consortium name="The MGC Project Team"/>
        </authorList>
    </citation>
    <scope>NUCLEOTIDE SEQUENCE [LARGE SCALE MRNA] (ISOFORM 1)</scope>
    <source>
        <tissue>Lymph</tissue>
    </source>
</reference>
<reference key="6">
    <citation type="journal article" date="2003" name="Nat. Biotechnol.">
        <title>Exploring proteomes and analyzing protein processing by mass spectrometric identification of sorted N-terminal peptides.</title>
        <authorList>
            <person name="Gevaert K."/>
            <person name="Goethals M."/>
            <person name="Martens L."/>
            <person name="Van Damme J."/>
            <person name="Staes A."/>
            <person name="Thomas G.R."/>
            <person name="Vandekerckhove J."/>
        </authorList>
    </citation>
    <scope>PROTEIN SEQUENCE OF 2-19</scope>
    <source>
        <tissue>Platelet</tissue>
    </source>
</reference>
<reference key="7">
    <citation type="journal article" date="2005" name="J. Virol.">
        <title>Human VAP-B is involved in hepatitis C virus replication through interaction with NS5A and NS5B.</title>
        <authorList>
            <person name="Hamamoto I."/>
            <person name="Nishimura Y."/>
            <person name="Okamoto T."/>
            <person name="Aizaki H."/>
            <person name="Liu M."/>
            <person name="Mori Y."/>
            <person name="Abe T."/>
            <person name="Suzuki T."/>
            <person name="Lai M.M."/>
            <person name="Miyamura T."/>
            <person name="Moriishi K."/>
            <person name="Matsuura Y."/>
        </authorList>
    </citation>
    <scope>INTERACTION WITH HEPATITIS C NON-STRUCTURAL PROTEIN 5A (MICROBIAL INFECTION)</scope>
    <scope>INTERACTION WITH HEPATITIS C RNA-DIRECTED RNA POLYMERASE (MICROBIAL INFECTION)</scope>
</reference>
<reference key="8">
    <citation type="journal article" date="2006" name="Cell">
        <title>Global, in vivo, and site-specific phosphorylation dynamics in signaling networks.</title>
        <authorList>
            <person name="Olsen J.V."/>
            <person name="Blagoev B."/>
            <person name="Gnad F."/>
            <person name="Macek B."/>
            <person name="Kumar C."/>
            <person name="Mortensen P."/>
            <person name="Mann M."/>
        </authorList>
    </citation>
    <scope>IDENTIFICATION BY MASS SPECTROMETRY [LARGE SCALE ANALYSIS]</scope>
    <source>
        <tissue>Cervix carcinoma</tissue>
    </source>
</reference>
<reference key="9">
    <citation type="journal article" date="2006" name="J. Biol. Chem.">
        <title>Characterization of amyotrophic lateral sclerosis-linked P56S mutation of vesicle-associated membrane protein-associated protein B (VAPB/ALS8).</title>
        <authorList>
            <person name="Kanekura K."/>
            <person name="Nishimoto I."/>
            <person name="Aiso S."/>
            <person name="Matsuoka M."/>
        </authorList>
    </citation>
    <scope>FUNCTION IN ENDOPLASMIC RETICULUM UNFOLDED PROTEIN RESPONSE</scope>
    <scope>CHARACTERIZATION OF VARIANT ALS8 SER-56</scope>
</reference>
<reference key="10">
    <citation type="journal article" date="2006" name="J. Biol. Chem.">
        <title>Efficient trafficking of ceramide from the endoplasmic reticulum to the Golgi apparatus requires a VAMP-associated protein-interacting FFAT motif of CERT.</title>
        <authorList>
            <person name="Kawano M."/>
            <person name="Kumagai K."/>
            <person name="Nishijima M."/>
            <person name="Hanada K."/>
        </authorList>
    </citation>
    <scope>INTERACTION WITH CERT1</scope>
</reference>
<reference key="11">
    <citation type="journal article" date="2008" name="Mol. Cell">
        <title>Kinase-selective enrichment enables quantitative phosphoproteomics of the kinome across the cell cycle.</title>
        <authorList>
            <person name="Daub H."/>
            <person name="Olsen J.V."/>
            <person name="Bairlein M."/>
            <person name="Gnad F."/>
            <person name="Oppermann F.S."/>
            <person name="Korner R."/>
            <person name="Greff Z."/>
            <person name="Keri G."/>
            <person name="Stemmann O."/>
            <person name="Mann M."/>
        </authorList>
    </citation>
    <scope>IDENTIFICATION BY MASS SPECTROMETRY [LARGE SCALE ANALYSIS]</scope>
    <source>
        <tissue>Cervix carcinoma</tissue>
    </source>
</reference>
<reference key="12">
    <citation type="journal article" date="2008" name="Proc. Natl. Acad. Sci. U.S.A.">
        <title>A quantitative atlas of mitotic phosphorylation.</title>
        <authorList>
            <person name="Dephoure N."/>
            <person name="Zhou C."/>
            <person name="Villen J."/>
            <person name="Beausoleil S.A."/>
            <person name="Bakalarski C.E."/>
            <person name="Elledge S.J."/>
            <person name="Gygi S.P."/>
        </authorList>
    </citation>
    <scope>PHOSPHORYLATION [LARGE SCALE ANALYSIS] AT THR-150; SER-156 AND SER-160</scope>
    <scope>IDENTIFICATION BY MASS SPECTROMETRY [LARGE SCALE ANALYSIS]</scope>
    <source>
        <tissue>Cervix carcinoma</tissue>
    </source>
</reference>
<reference key="13">
    <citation type="journal article" date="2009" name="Anal. Chem.">
        <title>Lys-N and trypsin cover complementary parts of the phosphoproteome in a refined SCX-based approach.</title>
        <authorList>
            <person name="Gauci S."/>
            <person name="Helbig A.O."/>
            <person name="Slijper M."/>
            <person name="Krijgsveld J."/>
            <person name="Heck A.J."/>
            <person name="Mohammed S."/>
        </authorList>
    </citation>
    <scope>ACETYLATION [LARGE SCALE ANALYSIS] AT ALA-2</scope>
    <scope>CLEAVAGE OF INITIATOR METHIONINE [LARGE SCALE ANALYSIS]</scope>
    <scope>IDENTIFICATION BY MASS SPECTROMETRY [LARGE SCALE ANALYSIS]</scope>
</reference>
<reference key="14">
    <citation type="journal article" date="2009" name="J. Biol. Chem.">
        <title>Promotion of neurite extension by protrudin requires its interaction with vesicle-associated membrane protein-associated protein.</title>
        <authorList>
            <person name="Saita S."/>
            <person name="Shirane M."/>
            <person name="Natume T."/>
            <person name="Iemura S."/>
            <person name="Nakayama K.I."/>
        </authorList>
    </citation>
    <scope>INTERACTION WITH ZFYVE27</scope>
</reference>
<reference key="15">
    <citation type="journal article" date="2010" name="J. Biol. Chem.">
        <title>Characterization of the properties of a novel mutation in VAPB in familial amyotrophic lateral sclerosis.</title>
        <authorList>
            <person name="Chen H.J."/>
            <person name="Anagnostou G."/>
            <person name="Chai A."/>
            <person name="Withers J."/>
            <person name="Morris A."/>
            <person name="Adhikaree J."/>
            <person name="Pennetta G."/>
            <person name="de Belleroche J.S."/>
        </authorList>
    </citation>
    <scope>FUNCTION IN ENDOPLASMIC RETICULUM UNFOLDED PROTEIN RESPONSE</scope>
    <scope>VARIANT ALS8 ILE-46</scope>
    <scope>CHARACTERIZATION OF VARIANTS ALS8 ILE-46 AND SER-56</scope>
    <scope>SUBUNIT</scope>
    <scope>INTERACTION WITH VAPA; VAMP1 AND VAMP2</scope>
</reference>
<reference key="16">
    <citation type="journal article" date="2010" name="Sci. Signal.">
        <title>Quantitative phosphoproteomics reveals widespread full phosphorylation site occupancy during mitosis.</title>
        <authorList>
            <person name="Olsen J.V."/>
            <person name="Vermeulen M."/>
            <person name="Santamaria A."/>
            <person name="Kumar C."/>
            <person name="Miller M.L."/>
            <person name="Jensen L.J."/>
            <person name="Gnad F."/>
            <person name="Cox J."/>
            <person name="Jensen T.S."/>
            <person name="Nigg E.A."/>
            <person name="Brunak S."/>
            <person name="Mann M."/>
        </authorList>
    </citation>
    <scope>PHOSPHORYLATION [LARGE SCALE ANALYSIS] AT THR-150; SER-156 AND SER-160</scope>
    <scope>IDENTIFICATION BY MASS SPECTROMETRY [LARGE SCALE ANALYSIS]</scope>
    <source>
        <tissue>Cervix carcinoma</tissue>
    </source>
</reference>
<reference key="17">
    <citation type="journal article" date="2011" name="BMC Syst. Biol.">
        <title>Initial characterization of the human central proteome.</title>
        <authorList>
            <person name="Burkard T.R."/>
            <person name="Planyavsky M."/>
            <person name="Kaupe I."/>
            <person name="Breitwieser F.P."/>
            <person name="Buerckstuemmer T."/>
            <person name="Bennett K.L."/>
            <person name="Superti-Furga G."/>
            <person name="Colinge J."/>
        </authorList>
    </citation>
    <scope>IDENTIFICATION BY MASS SPECTROMETRY [LARGE SCALE ANALYSIS]</scope>
</reference>
<reference key="18">
    <citation type="journal article" date="2011" name="Mol. Biol. Cell">
        <title>Protrudin serves as an adaptor molecule that connects KIF5 and its cargoes in vesicular transport during process formation.</title>
        <authorList>
            <person name="Matsuzaki F."/>
            <person name="Shirane M."/>
            <person name="Matsumoto M."/>
            <person name="Nakayama K.I."/>
        </authorList>
    </citation>
    <scope>INTERACTION WITH ZFYVE27 AND KIF5A</scope>
</reference>
<reference key="19">
    <citation type="journal article" date="2011" name="Sci. Signal.">
        <title>System-wide temporal characterization of the proteome and phosphoproteome of human embryonic stem cell differentiation.</title>
        <authorList>
            <person name="Rigbolt K.T."/>
            <person name="Prokhorova T.A."/>
            <person name="Akimov V."/>
            <person name="Henningsen J."/>
            <person name="Johansen P.T."/>
            <person name="Kratchmarova I."/>
            <person name="Kassem M."/>
            <person name="Mann M."/>
            <person name="Olsen J.V."/>
            <person name="Blagoev B."/>
        </authorList>
    </citation>
    <scope>IDENTIFICATION BY MASS SPECTROMETRY [LARGE SCALE ANALYSIS]</scope>
</reference>
<reference key="20">
    <citation type="journal article" date="2012" name="Hum. Mol. Genet.">
        <title>VAPB interacts with the mitochondrial protein PTPIP51 to regulate calcium homeostasis.</title>
        <authorList>
            <person name="De Vos K.J."/>
            <person name="Morotz G.M."/>
            <person name="Stoica R."/>
            <person name="Tudor E.L."/>
            <person name="Lau K.F."/>
            <person name="Ackerley S."/>
            <person name="Warley A."/>
            <person name="Shaw C.E."/>
            <person name="Miller C.C."/>
        </authorList>
    </citation>
    <scope>FUNCTION IN CELLULAR CALCIUM HOMEOSTASIS REGULATION</scope>
    <scope>SUBCELLULAR LOCATION</scope>
    <scope>INTERACTION WITH RMDN3</scope>
    <scope>CHARACTERIZATION OF VARIANT ALS8 SER-56</scope>
</reference>
<reference key="21">
    <citation type="journal article" date="2012" name="PLoS ONE">
        <title>Intrinsically unstructured domain 3 of hepatitis C Virus NS5A forms a 'fuzzy complex' with VAPB-MSP domain which carries ALS-causing mutations.</title>
        <authorList>
            <person name="Gupta G."/>
            <person name="Qin H."/>
            <person name="Song J."/>
        </authorList>
    </citation>
    <scope>INTERACTION WITH HEPATITIS C NON-STRUCTURAL PROTEIN 5A (MICROBIAL INFECTION)</scope>
</reference>
<reference key="22">
    <citation type="journal article" date="2013" name="J. Cell Sci.">
        <title>STARD3 or STARD3NL and VAP form a novel molecular tether between late endosomes and the ER.</title>
        <authorList>
            <person name="Alpy F."/>
            <person name="Rousseau A."/>
            <person name="Schwab Y."/>
            <person name="Legueux F."/>
            <person name="Stoll I."/>
            <person name="Wendling C."/>
            <person name="Spiegelhalter C."/>
            <person name="Kessler P."/>
            <person name="Mathelin C."/>
            <person name="Rio M.C."/>
            <person name="Levine T.P."/>
            <person name="Tomasetto C."/>
        </authorList>
    </citation>
    <scope>INTERACTION WITH STARD3 AND STARD3NL</scope>
</reference>
<reference key="23">
    <citation type="journal article" date="2013" name="J. Proteome Res.">
        <title>Toward a comprehensive characterization of a human cancer cell phosphoproteome.</title>
        <authorList>
            <person name="Zhou H."/>
            <person name="Di Palma S."/>
            <person name="Preisinger C."/>
            <person name="Peng M."/>
            <person name="Polat A.N."/>
            <person name="Heck A.J."/>
            <person name="Mohammed S."/>
        </authorList>
    </citation>
    <scope>PHOSPHORYLATION [LARGE SCALE ANALYSIS] AT SER-146; THR-150; SER-156; SER-158; SER-159; SER-160 AND SER-206</scope>
    <scope>IDENTIFICATION BY MASS SPECTROMETRY [LARGE SCALE ANALYSIS]</scope>
    <source>
        <tissue>Cervix carcinoma</tissue>
        <tissue>Erythroleukemia</tissue>
    </source>
</reference>
<reference key="24">
    <citation type="journal article" date="2014" name="J. Proteomics">
        <title>An enzyme assisted RP-RPLC approach for in-depth analysis of human liver phosphoproteome.</title>
        <authorList>
            <person name="Bian Y."/>
            <person name="Song C."/>
            <person name="Cheng K."/>
            <person name="Dong M."/>
            <person name="Wang F."/>
            <person name="Huang J."/>
            <person name="Sun D."/>
            <person name="Wang L."/>
            <person name="Ye M."/>
            <person name="Zou H."/>
        </authorList>
    </citation>
    <scope>PHOSPHORYLATION [LARGE SCALE ANALYSIS] AT SER-158 AND SER-160</scope>
    <scope>IDENTIFICATION BY MASS SPECTROMETRY [LARGE SCALE ANALYSIS]</scope>
    <source>
        <tissue>Liver</tissue>
    </source>
</reference>
<reference key="25">
    <citation type="journal article" date="2014" name="Proc. Natl. Acad. Sci. U.S.A.">
        <title>Mapping of SUMO sites and analysis of SUMOylation changes induced by external stimuli.</title>
        <authorList>
            <person name="Impens F."/>
            <person name="Radoshevich L."/>
            <person name="Cossart P."/>
            <person name="Ribet D."/>
        </authorList>
    </citation>
    <scope>SUMOYLATION [LARGE SCALE ANALYSIS] AT LYS-147</scope>
    <scope>IDENTIFICATION BY MASS SPECTROMETRY [LARGE SCALE ANALYSIS]</scope>
</reference>
<reference key="26">
    <citation type="journal article" date="2015" name="Proteomics">
        <title>N-terminome analysis of the human mitochondrial proteome.</title>
        <authorList>
            <person name="Vaca Jacome A.S."/>
            <person name="Rabilloud T."/>
            <person name="Schaeffer-Reiss C."/>
            <person name="Rompais M."/>
            <person name="Ayoub D."/>
            <person name="Lane L."/>
            <person name="Bairoch A."/>
            <person name="Van Dorsselaer A."/>
            <person name="Carapito C."/>
        </authorList>
    </citation>
    <scope>ACETYLATION [LARGE SCALE ANALYSIS] AT ALA-2</scope>
    <scope>CLEAVAGE OF INITIATOR METHIONINE [LARGE SCALE ANALYSIS]</scope>
    <scope>IDENTIFICATION BY MASS SPECTROMETRY [LARGE SCALE ANALYSIS]</scope>
</reference>
<reference key="27">
    <citation type="journal article" date="2018" name="EMBO Rep.">
        <title>Identification of MOSPD2, a novel scaffold for endoplasmic reticulum membrane contact sites.</title>
        <authorList>
            <person name="Di Mattia T."/>
            <person name="Wilhelm L.P."/>
            <person name="Ikhlef S."/>
            <person name="Wendling C."/>
            <person name="Spehner D."/>
            <person name="Nomine Y."/>
            <person name="Giordano F."/>
            <person name="Mathelin C."/>
            <person name="Drin G."/>
            <person name="Tomasetto C."/>
            <person name="Alpy F."/>
        </authorList>
    </citation>
    <scope>IDENTIFICATION BY MASS SPECTROMETRY</scope>
    <scope>MUTAGENESIS OF LYS-87 AND MET-89</scope>
</reference>
<reference key="28">
    <citation type="journal article" date="2019" name="Elife">
        <title>Human VPS13A is associated with multiple organelles and influences mitochondrial morphology and lipid droplet motility.</title>
        <authorList>
            <person name="Yeshaw W.M."/>
            <person name="van der Zwaag M."/>
            <person name="Pinto F."/>
            <person name="Lahaye L.L."/>
            <person name="Faber A.I."/>
            <person name="Gomez-Sanchez R."/>
            <person name="Dolga A.M."/>
            <person name="Poland C."/>
            <person name="Monaco A.P."/>
            <person name="van Ijzendoorn S.C."/>
            <person name="Grzeschik N.A."/>
            <person name="Velayos-Baeza A."/>
            <person name="Sibon O.C."/>
        </authorList>
    </citation>
    <scope>INTERACTION WITH VPS13A</scope>
</reference>
<reference key="29">
    <citation type="journal article" date="2020" name="EMBO J.">
        <title>FFAT motif phosphorylation controls formation and lipid transfer function of inter-organelle contacts.</title>
        <authorList>
            <person name="Di Mattia T."/>
            <person name="Martinet A."/>
            <person name="Ikhlef S."/>
            <person name="McEwen A.G."/>
            <person name="Nomine Y."/>
            <person name="Wendling C."/>
            <person name="Poussin-Courmontagne P."/>
            <person name="Voilquin L."/>
            <person name="Eberling P."/>
            <person name="Ruffenach F."/>
            <person name="Cavarelli J."/>
            <person name="Slee J."/>
            <person name="Levine T.P."/>
            <person name="Drin G."/>
            <person name="Tomasetto C."/>
            <person name="Alpy F."/>
        </authorList>
    </citation>
    <scope>INTERACTION WITH STARD3; RB1CC1; MIGA2; RMDN3; KCNB1; KCNB2 AND OSBPL1A</scope>
    <scope>MUTAGENESIS OF LYS-43</scope>
    <scope>SITE</scope>
    <scope>SUBCELLULAR LOCATION</scope>
</reference>
<reference key="30">
    <citation type="journal article" date="2019" name="J. Cell Biol.">
        <title>The activity of Sac1 across ER-TGN contact sites requires the four-phosphate-adaptor-protein-1.</title>
        <authorList>
            <person name="Venditti R."/>
            <person name="Masone M.C."/>
            <person name="Rega L.R."/>
            <person name="Di Tullio G."/>
            <person name="Santoro M."/>
            <person name="Polishchuk E."/>
            <person name="Serrano I.C."/>
            <person name="Olkkonen V.M."/>
            <person name="Harada A."/>
            <person name="Medina D.L."/>
            <person name="La Montagna R."/>
            <person name="De Matteis M.A."/>
        </authorList>
    </citation>
    <scope>INTERACTION WITH PLEKHA3 AND SACM1L</scope>
</reference>
<reference key="31">
    <citation type="journal article" date="2020" name="J. Cell Biol.">
        <title>GRAF2, WDR44, and MICAL1 mediate Rab8/10/11-dependent export of E-cadherin, MMP14, and CFTR DeltaF508.</title>
        <authorList>
            <person name="Lucken-Ardjomande Haesler S."/>
            <person name="Vallis Y."/>
            <person name="Pasche M."/>
            <person name="McMahon H.T."/>
        </authorList>
    </citation>
    <scope>FUNCTION</scope>
    <scope>SUBCELLULAR LOCATION</scope>
    <scope>INTERACTION WITH WDR44</scope>
</reference>
<reference key="32">
    <citation type="journal article" date="2004" name="Am. J. Hum. Genet.">
        <title>A mutation in the vesicle-trafficking protein VAPB causes late-onset spinal muscular atrophy and amyotrophic lateral sclerosis.</title>
        <authorList>
            <person name="Nishimura A.L."/>
            <person name="Mitne-Neto M."/>
            <person name="Silva H.C."/>
            <person name="Richieri-Costa A."/>
            <person name="Middleton S."/>
            <person name="Cascio D."/>
            <person name="Kok F."/>
            <person name="Oliveira J.R."/>
            <person name="Gillingwater T."/>
            <person name="Webb J."/>
            <person name="Skehel P."/>
            <person name="Zatz M."/>
        </authorList>
    </citation>
    <scope>VARIANT ALS8 SER-56</scope>
    <scope>VARIANT SMAPAD SER-56</scope>
</reference>
<proteinExistence type="evidence at protein level"/>
<sequence length="243" mass="27228">MAKVEQVLSLEPQHELKFRGPFTDVVTTNLKLGNPTDRNVCFKVKTTAPRRYCVRPNSGIIDAGASINVSVMLQPFDYDPNEKSKHKFMVQSMFAPTDTSDMEAVWKEAKPEDLMDSKLRCVFELPAENDKPHDVEINKIISTTASKTETPIVSKSLSSSLDDTEVKKVMEECKRLQGEVQRLREENKQFKEEDGLRMRKTVQSNSPISALAPTGKEEGLSTRLLALVVLFFIVGVIIGKIAL</sequence>
<feature type="initiator methionine" description="Removed" evidence="4 25 30">
    <location>
        <position position="1"/>
    </location>
</feature>
<feature type="chain" id="PRO_0000213473" description="Vesicle-associated membrane protein-associated protein B/C">
    <location>
        <begin position="2"/>
        <end position="243"/>
    </location>
</feature>
<feature type="topological domain" description="Cytoplasmic" evidence="2">
    <location>
        <begin position="2"/>
        <end position="222"/>
    </location>
</feature>
<feature type="transmembrane region" description="Helical; Anchor for type IV membrane protein" evidence="2">
    <location>
        <begin position="223"/>
        <end position="243"/>
    </location>
</feature>
<feature type="domain" description="MSP" evidence="3">
    <location>
        <begin position="7"/>
        <end position="124"/>
    </location>
</feature>
<feature type="coiled-coil region" evidence="2">
    <location>
        <begin position="159"/>
        <end position="196"/>
    </location>
</feature>
<feature type="site" description="Involved in binding the phosphorylated serine of the phospho-FFAT motif" evidence="19">
    <location>
        <position position="43"/>
    </location>
</feature>
<feature type="modified residue" description="N-acetylalanine" evidence="25 30">
    <location>
        <position position="2"/>
    </location>
</feature>
<feature type="modified residue" description="Phosphoserine" evidence="27">
    <location>
        <position position="146"/>
    </location>
</feature>
<feature type="modified residue" description="Phosphothreonine" evidence="24 26 27">
    <location>
        <position position="150"/>
    </location>
</feature>
<feature type="modified residue" description="Phosphoserine" evidence="24 26 27">
    <location>
        <position position="156"/>
    </location>
</feature>
<feature type="modified residue" description="Phosphoserine" evidence="27 28">
    <location>
        <position position="158"/>
    </location>
</feature>
<feature type="modified residue" description="Phosphoserine" evidence="27">
    <location>
        <position position="159"/>
    </location>
</feature>
<feature type="modified residue" description="Phosphoserine" evidence="24 26 27 28">
    <location>
        <position position="160"/>
    </location>
</feature>
<feature type="modified residue" description="Phosphoserine" evidence="27">
    <location>
        <position position="206"/>
    </location>
</feature>
<feature type="cross-link" description="Glycyl lysine isopeptide (Lys-Gly) (interchain with G-Cter in SUMO1)" evidence="29">
    <location>
        <position position="147"/>
    </location>
</feature>
<feature type="splice variant" id="VSP_003277" description="In isoform 2." evidence="21">
    <original>VMLQPFDYDPNEKSKHKFMVQSMFAPTDT</original>
    <variation>GRRWTADEEDSAEQQPHFSISPNWEGRRP</variation>
    <location>
        <begin position="71"/>
        <end position="99"/>
    </location>
</feature>
<feature type="splice variant" id="VSP_003278" description="In isoform 2." evidence="21">
    <location>
        <begin position="100"/>
        <end position="243"/>
    </location>
</feature>
<feature type="sequence variant" id="VAR_067964" description="In ALS8; it forms insoluble cytosolic aggregates; cannot activate the UPR pathway through ERN1/IRE1 induction; results in ubiquitinated aggregates accumulation and cell death; dbSNP:rs281875284." evidence="10">
    <original>T</original>
    <variation>I</variation>
    <location>
        <position position="46"/>
    </location>
</feature>
<feature type="sequence variant" id="VAR_026743" description="In ALS8 and SMAPAD; it forms insoluble cytosolic aggregates; cannot activate the UPR pathway; affects interaction with RMDN3; affects cellular calcium homeostasis; induces mislocalization to the non-ER compartments; enhances homodimerization; dbSNP:rs74315431." evidence="5 7 10 12">
    <original>P</original>
    <variation>S</variation>
    <location>
        <position position="56"/>
    </location>
</feature>
<feature type="mutagenesis site" description="Does not affect interaction with the conventional FFAT motif of OSBPL1A. Impairs the interactions of the MSP domain with the phosphorylated FFAT motif of STARD3." evidence="19">
    <original>K</original>
    <variation>L</variation>
    <location>
        <position position="43"/>
    </location>
</feature>
<feature type="mutagenesis site" description="Prevents binding to the FFAT motif in target proteins; when associated with D-89." evidence="15">
    <original>K</original>
    <variation>D</variation>
    <location>
        <position position="87"/>
    </location>
</feature>
<feature type="mutagenesis site" description="Prevents binding to the FFAT motif in target proteins; when associated with D-87." evidence="15">
    <original>M</original>
    <variation>D</variation>
    <location>
        <position position="89"/>
    </location>
</feature>
<feature type="sequence conflict" description="In Ref. 2; AAF67013." evidence="22" ref="2">
    <original>I</original>
    <variation>V</variation>
    <location>
        <position position="60"/>
    </location>
</feature>
<feature type="sequence conflict" description="In Ref. 2; AAF67013." evidence="22" ref="2">
    <original>I</original>
    <variation>L</variation>
    <location>
        <position position="67"/>
    </location>
</feature>
<feature type="sequence conflict" description="In Ref. 2; AAF67013." evidence="22" ref="2">
    <original>T</original>
    <variation>P</variation>
    <location>
        <position position="97"/>
    </location>
</feature>
<feature type="sequence conflict" description="In Ref. 2; AAF67013." evidence="22" ref="2">
    <original>EAVW</original>
    <variation>DGTR</variation>
    <location>
        <begin position="103"/>
        <end position="106"/>
    </location>
</feature>
<feature type="turn" evidence="31">
    <location>
        <begin position="4"/>
        <end position="7"/>
    </location>
</feature>
<feature type="strand" evidence="32">
    <location>
        <begin position="8"/>
        <end position="20"/>
    </location>
</feature>
<feature type="strand" evidence="32">
    <location>
        <begin position="26"/>
        <end position="33"/>
    </location>
</feature>
<feature type="strand" evidence="32">
    <location>
        <begin position="36"/>
        <end position="38"/>
    </location>
</feature>
<feature type="strand" evidence="32">
    <location>
        <begin position="40"/>
        <end position="47"/>
    </location>
</feature>
<feature type="turn" evidence="32">
    <location>
        <begin position="49"/>
        <end position="51"/>
    </location>
</feature>
<feature type="strand" evidence="32">
    <location>
        <begin position="52"/>
        <end position="61"/>
    </location>
</feature>
<feature type="strand" evidence="32">
    <location>
        <begin position="66"/>
        <end position="73"/>
    </location>
</feature>
<feature type="turn" evidence="31">
    <location>
        <begin position="82"/>
        <end position="84"/>
    </location>
</feature>
<feature type="strand" evidence="32">
    <location>
        <begin position="88"/>
        <end position="94"/>
    </location>
</feature>
<feature type="turn" evidence="32">
    <location>
        <begin position="104"/>
        <end position="108"/>
    </location>
</feature>
<feature type="strand" evidence="32">
    <location>
        <begin position="111"/>
        <end position="113"/>
    </location>
</feature>
<feature type="strand" evidence="32">
    <location>
        <begin position="115"/>
        <end position="124"/>
    </location>
</feature>
<keyword id="KW-0002">3D-structure</keyword>
<keyword id="KW-0007">Acetylation</keyword>
<keyword id="KW-0025">Alternative splicing</keyword>
<keyword id="KW-0036">Amyotrophic lateral sclerosis</keyword>
<keyword id="KW-0175">Coiled coil</keyword>
<keyword id="KW-0903">Direct protein sequencing</keyword>
<keyword id="KW-0225">Disease variant</keyword>
<keyword id="KW-0256">Endoplasmic reticulum</keyword>
<keyword id="KW-0945">Host-virus interaction</keyword>
<keyword id="KW-1017">Isopeptide bond</keyword>
<keyword id="KW-0472">Membrane</keyword>
<keyword id="KW-0523">Neurodegeneration</keyword>
<keyword id="KW-0597">Phosphoprotein</keyword>
<keyword id="KW-1267">Proteomics identification</keyword>
<keyword id="KW-1185">Reference proteome</keyword>
<keyword id="KW-0812">Transmembrane</keyword>
<keyword id="KW-1133">Transmembrane helix</keyword>
<keyword id="KW-0832">Ubl conjugation</keyword>
<keyword id="KW-0834">Unfolded protein response</keyword>
<name>VAPB_HUMAN</name>